<reference key="1">
    <citation type="journal article" date="2000" name="Science">
        <title>The genome sequence of Drosophila melanogaster.</title>
        <authorList>
            <person name="Adams M.D."/>
            <person name="Celniker S.E."/>
            <person name="Holt R.A."/>
            <person name="Evans C.A."/>
            <person name="Gocayne J.D."/>
            <person name="Amanatides P.G."/>
            <person name="Scherer S.E."/>
            <person name="Li P.W."/>
            <person name="Hoskins R.A."/>
            <person name="Galle R.F."/>
            <person name="George R.A."/>
            <person name="Lewis S.E."/>
            <person name="Richards S."/>
            <person name="Ashburner M."/>
            <person name="Henderson S.N."/>
            <person name="Sutton G.G."/>
            <person name="Wortman J.R."/>
            <person name="Yandell M.D."/>
            <person name="Zhang Q."/>
            <person name="Chen L.X."/>
            <person name="Brandon R.C."/>
            <person name="Rogers Y.-H.C."/>
            <person name="Blazej R.G."/>
            <person name="Champe M."/>
            <person name="Pfeiffer B.D."/>
            <person name="Wan K.H."/>
            <person name="Doyle C."/>
            <person name="Baxter E.G."/>
            <person name="Helt G."/>
            <person name="Nelson C.R."/>
            <person name="Miklos G.L.G."/>
            <person name="Abril J.F."/>
            <person name="Agbayani A."/>
            <person name="An H.-J."/>
            <person name="Andrews-Pfannkoch C."/>
            <person name="Baldwin D."/>
            <person name="Ballew R.M."/>
            <person name="Basu A."/>
            <person name="Baxendale J."/>
            <person name="Bayraktaroglu L."/>
            <person name="Beasley E.M."/>
            <person name="Beeson K.Y."/>
            <person name="Benos P.V."/>
            <person name="Berman B.P."/>
            <person name="Bhandari D."/>
            <person name="Bolshakov S."/>
            <person name="Borkova D."/>
            <person name="Botchan M.R."/>
            <person name="Bouck J."/>
            <person name="Brokstein P."/>
            <person name="Brottier P."/>
            <person name="Burtis K.C."/>
            <person name="Busam D.A."/>
            <person name="Butler H."/>
            <person name="Cadieu E."/>
            <person name="Center A."/>
            <person name="Chandra I."/>
            <person name="Cherry J.M."/>
            <person name="Cawley S."/>
            <person name="Dahlke C."/>
            <person name="Davenport L.B."/>
            <person name="Davies P."/>
            <person name="de Pablos B."/>
            <person name="Delcher A."/>
            <person name="Deng Z."/>
            <person name="Mays A.D."/>
            <person name="Dew I."/>
            <person name="Dietz S.M."/>
            <person name="Dodson K."/>
            <person name="Doup L.E."/>
            <person name="Downes M."/>
            <person name="Dugan-Rocha S."/>
            <person name="Dunkov B.C."/>
            <person name="Dunn P."/>
            <person name="Durbin K.J."/>
            <person name="Evangelista C.C."/>
            <person name="Ferraz C."/>
            <person name="Ferriera S."/>
            <person name="Fleischmann W."/>
            <person name="Fosler C."/>
            <person name="Gabrielian A.E."/>
            <person name="Garg N.S."/>
            <person name="Gelbart W.M."/>
            <person name="Glasser K."/>
            <person name="Glodek A."/>
            <person name="Gong F."/>
            <person name="Gorrell J.H."/>
            <person name="Gu Z."/>
            <person name="Guan P."/>
            <person name="Harris M."/>
            <person name="Harris N.L."/>
            <person name="Harvey D.A."/>
            <person name="Heiman T.J."/>
            <person name="Hernandez J.R."/>
            <person name="Houck J."/>
            <person name="Hostin D."/>
            <person name="Houston K.A."/>
            <person name="Howland T.J."/>
            <person name="Wei M.-H."/>
            <person name="Ibegwam C."/>
            <person name="Jalali M."/>
            <person name="Kalush F."/>
            <person name="Karpen G.H."/>
            <person name="Ke Z."/>
            <person name="Kennison J.A."/>
            <person name="Ketchum K.A."/>
            <person name="Kimmel B.E."/>
            <person name="Kodira C.D."/>
            <person name="Kraft C.L."/>
            <person name="Kravitz S."/>
            <person name="Kulp D."/>
            <person name="Lai Z."/>
            <person name="Lasko P."/>
            <person name="Lei Y."/>
            <person name="Levitsky A.A."/>
            <person name="Li J.H."/>
            <person name="Li Z."/>
            <person name="Liang Y."/>
            <person name="Lin X."/>
            <person name="Liu X."/>
            <person name="Mattei B."/>
            <person name="McIntosh T.C."/>
            <person name="McLeod M.P."/>
            <person name="McPherson D."/>
            <person name="Merkulov G."/>
            <person name="Milshina N.V."/>
            <person name="Mobarry C."/>
            <person name="Morris J."/>
            <person name="Moshrefi A."/>
            <person name="Mount S.M."/>
            <person name="Moy M."/>
            <person name="Murphy B."/>
            <person name="Murphy L."/>
            <person name="Muzny D.M."/>
            <person name="Nelson D.L."/>
            <person name="Nelson D.R."/>
            <person name="Nelson K.A."/>
            <person name="Nixon K."/>
            <person name="Nusskern D.R."/>
            <person name="Pacleb J.M."/>
            <person name="Palazzolo M."/>
            <person name="Pittman G.S."/>
            <person name="Pan S."/>
            <person name="Pollard J."/>
            <person name="Puri V."/>
            <person name="Reese M.G."/>
            <person name="Reinert K."/>
            <person name="Remington K."/>
            <person name="Saunders R.D.C."/>
            <person name="Scheeler F."/>
            <person name="Shen H."/>
            <person name="Shue B.C."/>
            <person name="Siden-Kiamos I."/>
            <person name="Simpson M."/>
            <person name="Skupski M.P."/>
            <person name="Smith T.J."/>
            <person name="Spier E."/>
            <person name="Spradling A.C."/>
            <person name="Stapleton M."/>
            <person name="Strong R."/>
            <person name="Sun E."/>
            <person name="Svirskas R."/>
            <person name="Tector C."/>
            <person name="Turner R."/>
            <person name="Venter E."/>
            <person name="Wang A.H."/>
            <person name="Wang X."/>
            <person name="Wang Z.-Y."/>
            <person name="Wassarman D.A."/>
            <person name="Weinstock G.M."/>
            <person name="Weissenbach J."/>
            <person name="Williams S.M."/>
            <person name="Woodage T."/>
            <person name="Worley K.C."/>
            <person name="Wu D."/>
            <person name="Yang S."/>
            <person name="Yao Q.A."/>
            <person name="Ye J."/>
            <person name="Yeh R.-F."/>
            <person name="Zaveri J.S."/>
            <person name="Zhan M."/>
            <person name="Zhang G."/>
            <person name="Zhao Q."/>
            <person name="Zheng L."/>
            <person name="Zheng X.H."/>
            <person name="Zhong F.N."/>
            <person name="Zhong W."/>
            <person name="Zhou X."/>
            <person name="Zhu S.C."/>
            <person name="Zhu X."/>
            <person name="Smith H.O."/>
            <person name="Gibbs R.A."/>
            <person name="Myers E.W."/>
            <person name="Rubin G.M."/>
            <person name="Venter J.C."/>
        </authorList>
    </citation>
    <scope>NUCLEOTIDE SEQUENCE [LARGE SCALE GENOMIC DNA]</scope>
    <source>
        <strain>Berkeley</strain>
    </source>
</reference>
<reference key="2">
    <citation type="journal article" date="2002" name="Genome Biol.">
        <title>Annotation of the Drosophila melanogaster euchromatic genome: a systematic review.</title>
        <authorList>
            <person name="Misra S."/>
            <person name="Crosby M.A."/>
            <person name="Mungall C.J."/>
            <person name="Matthews B.B."/>
            <person name="Campbell K.S."/>
            <person name="Hradecky P."/>
            <person name="Huang Y."/>
            <person name="Kaminker J.S."/>
            <person name="Millburn G.H."/>
            <person name="Prochnik S.E."/>
            <person name="Smith C.D."/>
            <person name="Tupy J.L."/>
            <person name="Whitfield E.J."/>
            <person name="Bayraktaroglu L."/>
            <person name="Berman B.P."/>
            <person name="Bettencourt B.R."/>
            <person name="Celniker S.E."/>
            <person name="de Grey A.D.N.J."/>
            <person name="Drysdale R.A."/>
            <person name="Harris N.L."/>
            <person name="Richter J."/>
            <person name="Russo S."/>
            <person name="Schroeder A.J."/>
            <person name="Shu S.Q."/>
            <person name="Stapleton M."/>
            <person name="Yamada C."/>
            <person name="Ashburner M."/>
            <person name="Gelbart W.M."/>
            <person name="Rubin G.M."/>
            <person name="Lewis S.E."/>
        </authorList>
    </citation>
    <scope>GENOME REANNOTATION</scope>
    <source>
        <strain>Berkeley</strain>
    </source>
</reference>
<reference key="3">
    <citation type="journal article" date="2002" name="Genome Biol.">
        <title>A Drosophila full-length cDNA resource.</title>
        <authorList>
            <person name="Stapleton M."/>
            <person name="Carlson J.W."/>
            <person name="Brokstein P."/>
            <person name="Yu C."/>
            <person name="Champe M."/>
            <person name="George R.A."/>
            <person name="Guarin H."/>
            <person name="Kronmiller B."/>
            <person name="Pacleb J.M."/>
            <person name="Park S."/>
            <person name="Wan K.H."/>
            <person name="Rubin G.M."/>
            <person name="Celniker S.E."/>
        </authorList>
    </citation>
    <scope>NUCLEOTIDE SEQUENCE [LARGE SCALE MRNA]</scope>
    <source>
        <strain>Berkeley</strain>
        <tissue>Embryo</tissue>
    </source>
</reference>
<reference key="4">
    <citation type="journal article" date="2008" name="J. Proteome Res.">
        <title>Phosphoproteome analysis of Drosophila melanogaster embryos.</title>
        <authorList>
            <person name="Zhai B."/>
            <person name="Villen J."/>
            <person name="Beausoleil S.A."/>
            <person name="Mintseris J."/>
            <person name="Gygi S.P."/>
        </authorList>
    </citation>
    <scope>PHOSPHORYLATION [LARGE SCALE ANALYSIS] AT SER-212 AND SER-219</scope>
    <scope>IDENTIFICATION BY MASS SPECTROMETRY</scope>
    <source>
        <tissue>Embryo</tissue>
    </source>
</reference>
<gene>
    <name type="primary">mindy3</name>
    <name type="ORF">CG7332</name>
</gene>
<dbReference type="EC" id="3.4.19.12"/>
<dbReference type="EMBL" id="AE014298">
    <property type="protein sequence ID" value="AAF48903.1"/>
    <property type="molecule type" value="Genomic_DNA"/>
</dbReference>
<dbReference type="EMBL" id="AY058544">
    <property type="protein sequence ID" value="AAL13773.1"/>
    <property type="molecule type" value="mRNA"/>
</dbReference>
<dbReference type="RefSeq" id="NP_001285417.1">
    <property type="nucleotide sequence ID" value="NM_001298488.1"/>
</dbReference>
<dbReference type="RefSeq" id="NP_573338.1">
    <property type="nucleotide sequence ID" value="NM_133110.3"/>
</dbReference>
<dbReference type="BioGRID" id="59193">
    <property type="interactions" value="2"/>
</dbReference>
<dbReference type="FunCoup" id="Q9VWN5">
    <property type="interactions" value="2113"/>
</dbReference>
<dbReference type="IntAct" id="Q9VWN5">
    <property type="interactions" value="6"/>
</dbReference>
<dbReference type="STRING" id="7227.FBpp0309678"/>
<dbReference type="GlyGen" id="Q9VWN5">
    <property type="glycosylation" value="5 sites, 1 O-linked glycan (4 sites)"/>
</dbReference>
<dbReference type="iPTMnet" id="Q9VWN5"/>
<dbReference type="PaxDb" id="7227-FBpp0074418"/>
<dbReference type="DNASU" id="32885"/>
<dbReference type="EnsemblMetazoa" id="FBtr0074647">
    <property type="protein sequence ID" value="FBpp0074418"/>
    <property type="gene ID" value="FBgn0030973"/>
</dbReference>
<dbReference type="EnsemblMetazoa" id="FBtr0342877">
    <property type="protein sequence ID" value="FBpp0309678"/>
    <property type="gene ID" value="FBgn0030973"/>
</dbReference>
<dbReference type="GeneID" id="32885"/>
<dbReference type="KEGG" id="dme:Dmel_CG7332"/>
<dbReference type="UCSC" id="CG7332-RA">
    <property type="organism name" value="d. melanogaster"/>
</dbReference>
<dbReference type="AGR" id="FB:FBgn0030973"/>
<dbReference type="FlyBase" id="FBgn0030973">
    <property type="gene designation" value="CG7332"/>
</dbReference>
<dbReference type="VEuPathDB" id="VectorBase:FBgn0030973"/>
<dbReference type="eggNOG" id="KOG2871">
    <property type="taxonomic scope" value="Eukaryota"/>
</dbReference>
<dbReference type="HOGENOM" id="CLU_033478_0_0_1"/>
<dbReference type="InParanoid" id="Q9VWN5"/>
<dbReference type="OMA" id="VLQTKWP"/>
<dbReference type="OrthoDB" id="9981542at2759"/>
<dbReference type="PhylomeDB" id="Q9VWN5"/>
<dbReference type="BioGRID-ORCS" id="32885">
    <property type="hits" value="0 hits in 1 CRISPR screen"/>
</dbReference>
<dbReference type="GenomeRNAi" id="32885"/>
<dbReference type="PRO" id="PR:Q9VWN5"/>
<dbReference type="Proteomes" id="UP000000803">
    <property type="component" value="Chromosome X"/>
</dbReference>
<dbReference type="Bgee" id="FBgn0030973">
    <property type="expression patterns" value="Expressed in transmedullary Y neuron TmY14 in brain and 214 other cell types or tissues"/>
</dbReference>
<dbReference type="ExpressionAtlas" id="Q9VWN5">
    <property type="expression patterns" value="baseline and differential"/>
</dbReference>
<dbReference type="GO" id="GO:0004843">
    <property type="term" value="F:cysteine-type deubiquitinase activity"/>
    <property type="evidence" value="ECO:0007669"/>
    <property type="project" value="UniProtKB-EC"/>
</dbReference>
<dbReference type="GO" id="GO:1990380">
    <property type="term" value="F:K48-linked deubiquitinase activity"/>
    <property type="evidence" value="ECO:0000318"/>
    <property type="project" value="GO_Central"/>
</dbReference>
<dbReference type="GO" id="GO:0071108">
    <property type="term" value="P:protein K48-linked deubiquitination"/>
    <property type="evidence" value="ECO:0007669"/>
    <property type="project" value="InterPro"/>
</dbReference>
<dbReference type="GO" id="GO:0006508">
    <property type="term" value="P:proteolysis"/>
    <property type="evidence" value="ECO:0007669"/>
    <property type="project" value="UniProtKB-KW"/>
</dbReference>
<dbReference type="Gene3D" id="1.10.238.10">
    <property type="entry name" value="EF-hand"/>
    <property type="match status" value="1"/>
</dbReference>
<dbReference type="InterPro" id="IPR011992">
    <property type="entry name" value="EF-hand-dom_pair"/>
</dbReference>
<dbReference type="InterPro" id="IPR025257">
    <property type="entry name" value="MINDY-3/4_CD"/>
</dbReference>
<dbReference type="InterPro" id="IPR039785">
    <property type="entry name" value="MINY3/4"/>
</dbReference>
<dbReference type="PANTHER" id="PTHR12473:SF17">
    <property type="entry name" value="UBIQUITIN CARBOXYL-TERMINAL HYDROLASE MINDY-3"/>
    <property type="match status" value="1"/>
</dbReference>
<dbReference type="PANTHER" id="PTHR12473">
    <property type="entry name" value="UBIQUITIN CARBOXYL-TERMINAL HYDROLASE MINDY-4-RELATED"/>
    <property type="match status" value="1"/>
</dbReference>
<dbReference type="Pfam" id="PF13898">
    <property type="entry name" value="MINDY-3_4_CD"/>
    <property type="match status" value="1"/>
</dbReference>
<dbReference type="SMART" id="SM01174">
    <property type="entry name" value="DUF4205"/>
    <property type="match status" value="1"/>
</dbReference>
<dbReference type="SUPFAM" id="SSF47473">
    <property type="entry name" value="EF-hand"/>
    <property type="match status" value="1"/>
</dbReference>
<comment type="function">
    <text evidence="2">Hydrolase that can remove 'Lys-48'-linked conjugated ubiquitin from proteins.</text>
</comment>
<comment type="catalytic activity">
    <reaction evidence="2">
        <text>Thiol-dependent hydrolysis of ester, thioester, amide, peptide and isopeptide bonds formed by the C-terminal Gly of ubiquitin (a 76-residue protein attached to proteins as an intracellular targeting signal).</text>
        <dbReference type="EC" id="3.4.19.12"/>
    </reaction>
</comment>
<comment type="similarity">
    <text evidence="5">Belongs to the MINDY deubiquitinase family. FAM188 subfamily.</text>
</comment>
<organism>
    <name type="scientific">Drosophila melanogaster</name>
    <name type="common">Fruit fly</name>
    <dbReference type="NCBI Taxonomy" id="7227"/>
    <lineage>
        <taxon>Eukaryota</taxon>
        <taxon>Metazoa</taxon>
        <taxon>Ecdysozoa</taxon>
        <taxon>Arthropoda</taxon>
        <taxon>Hexapoda</taxon>
        <taxon>Insecta</taxon>
        <taxon>Pterygota</taxon>
        <taxon>Neoptera</taxon>
        <taxon>Endopterygota</taxon>
        <taxon>Diptera</taxon>
        <taxon>Brachycera</taxon>
        <taxon>Muscomorpha</taxon>
        <taxon>Ephydroidea</taxon>
        <taxon>Drosophilidae</taxon>
        <taxon>Drosophila</taxon>
        <taxon>Sophophora</taxon>
    </lineage>
</organism>
<accession>Q9VWN5</accession>
<sequence length="560" mass="61755">MNEKIVREQRGGEDSPSSVSAKSATAAASASTASMTFASAALESHKTTTITTASSSPRTSGASASASSSSRSASAPASSSSQQEKQPMLNATDMRELREIKQLLWGDNVREDVFKRWSQGFEFSKVEPSALVQKQGGPCAVIAPVQAYLLKIIIMDLPGIKLSEISLDKSQNLLIQALCDILKNCRAPRYRIVHLLRRRGNATEAGSTKKRSPAGEEESALAGQAAGSSEEVEEAAEATPASVSKLSQALQLEHDMHQELSPDEFHERLHTLHFKNIAAVARYYMENYDQLAHTYGVLLFMYSVFLTKGLELVAADISDTSEPLIHSTYGYGGQSLINLMLTGRAVAHVWDNEQDVGGLKLRGICEQSDIGFITLMEEMRYCTVGSFFKNPRYPVWVMGSDTHLTVLFSNEKRLVSPETPSETGRRIFKSYDPEGNNFISTTMLREVLIALNLVSEPAYVALMQKRLDPENLGIILLNAFMDEFFPLESRSTPDTFELMHYNGIPGSNENNKVRYYCGTAILLEGDLKSVCTSNPMVTCLQTKWPNIEINWHDGHMPSLN</sequence>
<feature type="chain" id="PRO_0000317565" description="Ubiquitin carboxyl-terminal hydrolase MINDY-3 homolog">
    <location>
        <begin position="1"/>
        <end position="560"/>
    </location>
</feature>
<feature type="region of interest" description="Disordered" evidence="3">
    <location>
        <begin position="1"/>
        <end position="30"/>
    </location>
</feature>
<feature type="region of interest" description="Disordered" evidence="3">
    <location>
        <begin position="44"/>
        <end position="91"/>
    </location>
</feature>
<feature type="region of interest" description="Disordered" evidence="3">
    <location>
        <begin position="203"/>
        <end position="237"/>
    </location>
</feature>
<feature type="compositionally biased region" description="Basic and acidic residues" evidence="3">
    <location>
        <begin position="1"/>
        <end position="13"/>
    </location>
</feature>
<feature type="compositionally biased region" description="Low complexity" evidence="3">
    <location>
        <begin position="15"/>
        <end position="30"/>
    </location>
</feature>
<feature type="compositionally biased region" description="Low complexity" evidence="3">
    <location>
        <begin position="52"/>
        <end position="81"/>
    </location>
</feature>
<feature type="active site" description="Nucleophile" evidence="1">
    <location>
        <position position="139"/>
    </location>
</feature>
<feature type="active site" description="Proton acceptor" evidence="1">
    <location>
        <position position="403"/>
    </location>
</feature>
<feature type="modified residue" description="Phosphoserine" evidence="4">
    <location>
        <position position="212"/>
    </location>
</feature>
<feature type="modified residue" description="Phosphoserine" evidence="4">
    <location>
        <position position="219"/>
    </location>
</feature>
<proteinExistence type="evidence at protein level"/>
<protein>
    <recommendedName>
        <fullName>Ubiquitin carboxyl-terminal hydrolase MINDY-3 homolog</fullName>
        <ecNumber>3.4.19.12</ecNumber>
    </recommendedName>
    <alternativeName>
        <fullName>Deubiquitinating enzyme MINDY-3</fullName>
    </alternativeName>
    <alternativeName>
        <fullName>Protein CARP homolog</fullName>
    </alternativeName>
</protein>
<evidence type="ECO:0000250" key="1">
    <source>
        <dbReference type="UniProtKB" id="Q8N5J2"/>
    </source>
</evidence>
<evidence type="ECO:0000250" key="2">
    <source>
        <dbReference type="UniProtKB" id="Q9H8M7"/>
    </source>
</evidence>
<evidence type="ECO:0000256" key="3">
    <source>
        <dbReference type="SAM" id="MobiDB-lite"/>
    </source>
</evidence>
<evidence type="ECO:0000269" key="4">
    <source>
    </source>
</evidence>
<evidence type="ECO:0000305" key="5"/>
<name>MINY3_DROME</name>
<keyword id="KW-0378">Hydrolase</keyword>
<keyword id="KW-0597">Phosphoprotein</keyword>
<keyword id="KW-0645">Protease</keyword>
<keyword id="KW-1185">Reference proteome</keyword>
<keyword id="KW-0788">Thiol protease</keyword>
<keyword id="KW-0833">Ubl conjugation pathway</keyword>